<reference key="1">
    <citation type="journal article" date="2011" name="Cell">
        <title>Insight into structure and assembly of the nuclear pore complex by utilizing the genome of a eukaryotic thermophile.</title>
        <authorList>
            <person name="Amlacher S."/>
            <person name="Sarges P."/>
            <person name="Flemming D."/>
            <person name="van Noort V."/>
            <person name="Kunze R."/>
            <person name="Devos D.P."/>
            <person name="Arumugam M."/>
            <person name="Bork P."/>
            <person name="Hurt E."/>
        </authorList>
    </citation>
    <scope>NUCLEOTIDE SEQUENCE [LARGE SCALE GENOMIC DNA]</scope>
    <source>
        <strain>DSM 1495 / CBS 144.50 / IMI 039719</strain>
    </source>
</reference>
<accession>G0SEA3</accession>
<accession>G0ZGV3</accession>
<name>GLE2_CHATD</name>
<gene>
    <name type="primary">GLE2</name>
    <name type="ORF">CTHT_0063040</name>
</gene>
<evidence type="ECO:0000250" key="1">
    <source>
        <dbReference type="UniProtKB" id="P40066"/>
    </source>
</evidence>
<evidence type="ECO:0000255" key="2"/>
<evidence type="ECO:0000256" key="3">
    <source>
        <dbReference type="SAM" id="MobiDB-lite"/>
    </source>
</evidence>
<evidence type="ECO:0000305" key="4"/>
<evidence type="ECO:0000305" key="5">
    <source>
    </source>
</evidence>
<organism>
    <name type="scientific">Chaetomium thermophilum (strain DSM 1495 / CBS 144.50 / IMI 039719)</name>
    <name type="common">Thermochaetoides thermophila</name>
    <dbReference type="NCBI Taxonomy" id="759272"/>
    <lineage>
        <taxon>Eukaryota</taxon>
        <taxon>Fungi</taxon>
        <taxon>Dikarya</taxon>
        <taxon>Ascomycota</taxon>
        <taxon>Pezizomycotina</taxon>
        <taxon>Sordariomycetes</taxon>
        <taxon>Sordariomycetidae</taxon>
        <taxon>Sordariales</taxon>
        <taxon>Chaetomiaceae</taxon>
        <taxon>Thermochaetoides</taxon>
    </lineage>
</organism>
<protein>
    <recommendedName>
        <fullName evidence="4">mRNA export factor GLE2</fullName>
    </recommendedName>
    <alternativeName>
        <fullName evidence="4">Nuclear pore protein GLE2</fullName>
    </alternativeName>
    <alternativeName>
        <fullName evidence="4">Nucleoporin GLE2</fullName>
    </alternativeName>
</protein>
<keyword id="KW-0472">Membrane</keyword>
<keyword id="KW-0509">mRNA transport</keyword>
<keyword id="KW-0906">Nuclear pore complex</keyword>
<keyword id="KW-0539">Nucleus</keyword>
<keyword id="KW-0653">Protein transport</keyword>
<keyword id="KW-1185">Reference proteome</keyword>
<keyword id="KW-0677">Repeat</keyword>
<keyword id="KW-0811">Translocation</keyword>
<keyword id="KW-0813">Transport</keyword>
<keyword id="KW-0853">WD repeat</keyword>
<proteinExistence type="inferred from homology"/>
<feature type="chain" id="PRO_0000433190" description="mRNA export factor GLE2">
    <location>
        <begin position="1"/>
        <end position="357"/>
    </location>
</feature>
<feature type="repeat" description="WD 1" evidence="2">
    <location>
        <begin position="28"/>
        <end position="71"/>
    </location>
</feature>
<feature type="repeat" description="WD 2" evidence="2">
    <location>
        <begin position="76"/>
        <end position="115"/>
    </location>
</feature>
<feature type="repeat" description="WD 3" evidence="2">
    <location>
        <begin position="117"/>
        <end position="158"/>
    </location>
</feature>
<feature type="repeat" description="WD 4" evidence="2">
    <location>
        <begin position="160"/>
        <end position="197"/>
    </location>
</feature>
<feature type="repeat" description="WD 5" evidence="2">
    <location>
        <begin position="256"/>
        <end position="295"/>
    </location>
</feature>
<feature type="region of interest" description="Disordered" evidence="3">
    <location>
        <begin position="1"/>
        <end position="31"/>
    </location>
</feature>
<dbReference type="EMBL" id="GL988046">
    <property type="protein sequence ID" value="EGS18280.1"/>
    <property type="molecule type" value="Genomic_DNA"/>
</dbReference>
<dbReference type="EMBL" id="JF276298">
    <property type="protein sequence ID" value="AEL00691.1"/>
    <property type="molecule type" value="Genomic_DNA"/>
</dbReference>
<dbReference type="RefSeq" id="XP_006696611.1">
    <property type="nucleotide sequence ID" value="XM_006696548.1"/>
</dbReference>
<dbReference type="SMR" id="G0SEA3"/>
<dbReference type="STRING" id="759272.G0SEA3"/>
<dbReference type="TCDB" id="1.I.1.1.2">
    <property type="family name" value="the nuclear pore complex (npc) family"/>
</dbReference>
<dbReference type="GeneID" id="18260342"/>
<dbReference type="KEGG" id="cthr:CTHT_0063040"/>
<dbReference type="eggNOG" id="KOG0647">
    <property type="taxonomic scope" value="Eukaryota"/>
</dbReference>
<dbReference type="HOGENOM" id="CLU_038526_1_0_1"/>
<dbReference type="OMA" id="EAMDQSI"/>
<dbReference type="OrthoDB" id="256303at2759"/>
<dbReference type="Proteomes" id="UP000008066">
    <property type="component" value="Unassembled WGS sequence"/>
</dbReference>
<dbReference type="GO" id="GO:0031965">
    <property type="term" value="C:nuclear membrane"/>
    <property type="evidence" value="ECO:0007669"/>
    <property type="project" value="UniProtKB-SubCell"/>
</dbReference>
<dbReference type="GO" id="GO:0005643">
    <property type="term" value="C:nuclear pore"/>
    <property type="evidence" value="ECO:0007669"/>
    <property type="project" value="UniProtKB-SubCell"/>
</dbReference>
<dbReference type="GO" id="GO:0051028">
    <property type="term" value="P:mRNA transport"/>
    <property type="evidence" value="ECO:0007669"/>
    <property type="project" value="UniProtKB-KW"/>
</dbReference>
<dbReference type="GO" id="GO:0015031">
    <property type="term" value="P:protein transport"/>
    <property type="evidence" value="ECO:0007669"/>
    <property type="project" value="UniProtKB-KW"/>
</dbReference>
<dbReference type="FunFam" id="2.130.10.10:FF:000190">
    <property type="entry name" value="Nuclear pore complex subunit"/>
    <property type="match status" value="1"/>
</dbReference>
<dbReference type="Gene3D" id="2.130.10.10">
    <property type="entry name" value="YVTN repeat-like/Quinoprotein amine dehydrogenase"/>
    <property type="match status" value="1"/>
</dbReference>
<dbReference type="InterPro" id="IPR015943">
    <property type="entry name" value="WD40/YVTN_repeat-like_dom_sf"/>
</dbReference>
<dbReference type="InterPro" id="IPR036322">
    <property type="entry name" value="WD40_repeat_dom_sf"/>
</dbReference>
<dbReference type="InterPro" id="IPR001680">
    <property type="entry name" value="WD40_rpt"/>
</dbReference>
<dbReference type="PANTHER" id="PTHR10971">
    <property type="entry name" value="MRNA EXPORT FACTOR AND BUB3"/>
    <property type="match status" value="1"/>
</dbReference>
<dbReference type="Pfam" id="PF00400">
    <property type="entry name" value="WD40"/>
    <property type="match status" value="4"/>
</dbReference>
<dbReference type="SMART" id="SM00320">
    <property type="entry name" value="WD40"/>
    <property type="match status" value="4"/>
</dbReference>
<dbReference type="SUPFAM" id="SSF50978">
    <property type="entry name" value="WD40 repeat-like"/>
    <property type="match status" value="1"/>
</dbReference>
<dbReference type="PROSITE" id="PS50082">
    <property type="entry name" value="WD_REPEATS_2"/>
    <property type="match status" value="3"/>
</dbReference>
<dbReference type="PROSITE" id="PS50294">
    <property type="entry name" value="WD_REPEATS_REGION"/>
    <property type="match status" value="2"/>
</dbReference>
<comment type="function">
    <text evidence="1">Functions as a component of the nuclear pore complex (NPC). NPC components, collectively referred to as nucleoporins (NUPs), can play the role of both NPC structural components and of docking or interaction partners for transiently associated nuclear transport factors. It is specifically important for nuclear mRNA export.</text>
</comment>
<comment type="subunit">
    <text evidence="1 5">Component of the nuclear pore complex (NPC). NPC constitutes the exclusive means of nucleocytoplasmic transport. NPCs allow the passive diffusion of ions and small molecules and the active, nuclear transport receptor-mediated bidirectional transport of macromolecules such as proteins, RNAs, ribonucleoparticles (RNPs), and ribosomal subunits across the nuclear envelope. Due to its 8-fold rotational symmetry, all subunits are present with 8 copies or multiples thereof.</text>
</comment>
<comment type="subcellular location">
    <subcellularLocation>
        <location evidence="1">Nucleus</location>
        <location evidence="1">Nuclear pore complex</location>
    </subcellularLocation>
    <subcellularLocation>
        <location evidence="1">Nucleus membrane</location>
        <topology evidence="1">Peripheral membrane protein</topology>
        <orientation evidence="1">Cytoplasmic side</orientation>
    </subcellularLocation>
    <subcellularLocation>
        <location evidence="1">Nucleus membrane</location>
        <topology evidence="1">Peripheral membrane protein</topology>
        <orientation evidence="1">Nucleoplasmic side</orientation>
    </subcellularLocation>
    <text evidence="1">Symmetric distribution.</text>
</comment>
<comment type="similarity">
    <text evidence="4">Belongs to the WD repeat rae1 family.</text>
</comment>
<sequence>MAGLFGTTTSTTTSTLGDLKNDVELGSPPEDSITDLSFNPNPNDPKDFLAVSSWDKKVRVYEIAANGQNQGKVQMEHEGPVFAVDFFKDGTKVISAGADKQAKVLDLASGQAMQVAAHDAPIRCVKYFEAGGTPMAVTGSWDKTIKYWDFRSATPAGTVQCQERVYTMDVKENLLVIGTADRYIDVINLKEPVKFYKTLQSPLKWQTRVVSCFTDSQGFAIGSIEGRCAIQYVEDKDQSMNFSFKCHRDTPQNNVTNVHAVNAISFHPQHGTFSTAGSDGTFHFWDKDAKHRLKGYPNVGGSITATKFNRNGTIFAYAISYDWSKGYQGNTANYPTKVMLHPVLGDECKPRPSVKKR</sequence>